<protein>
    <recommendedName>
        <fullName evidence="1">Probable 4-amino-4-deoxy-L-arabinose-phosphoundecaprenol flippase subunit ArnE</fullName>
        <shortName evidence="1">L-Ara4N-phosphoundecaprenol flippase subunit ArnE</shortName>
    </recommendedName>
    <alternativeName>
        <fullName evidence="1">Undecaprenyl phosphate-aminoarabinose flippase subunit ArnE</fullName>
    </alternativeName>
</protein>
<feature type="chain" id="PRO_0000382982" description="Probable 4-amino-4-deoxy-L-arabinose-phosphoundecaprenol flippase subunit ArnE">
    <location>
        <begin position="1"/>
        <end position="115"/>
    </location>
</feature>
<feature type="transmembrane region" description="Helical" evidence="1">
    <location>
        <begin position="42"/>
        <end position="62"/>
    </location>
</feature>
<feature type="transmembrane region" description="Helical" evidence="1">
    <location>
        <begin position="65"/>
        <end position="85"/>
    </location>
</feature>
<feature type="transmembrane region" description="Helical" evidence="1">
    <location>
        <begin position="93"/>
        <end position="112"/>
    </location>
</feature>
<feature type="domain" description="EamA" evidence="1">
    <location>
        <begin position="46"/>
        <end position="113"/>
    </location>
</feature>
<name>ARNE_PSEA8</name>
<comment type="function">
    <text evidence="1">Translocates 4-amino-4-deoxy-L-arabinose-phosphoundecaprenol (alpha-L-Ara4N-phosphoundecaprenol) from the cytoplasmic to the periplasmic side of the inner membrane.</text>
</comment>
<comment type="pathway">
    <text evidence="1">Bacterial outer membrane biogenesis; lipopolysaccharide biosynthesis.</text>
</comment>
<comment type="subunit">
    <text evidence="1">Heterodimer of ArnE and ArnF.</text>
</comment>
<comment type="subcellular location">
    <subcellularLocation>
        <location evidence="1">Cell inner membrane</location>
        <topology evidence="1">Multi-pass membrane protein</topology>
    </subcellularLocation>
</comment>
<comment type="similarity">
    <text evidence="1">Belongs to the ArnE family.</text>
</comment>
<sequence length="115" mass="12496">MSAALLLATLLMTGLGQVAQKLTVEHWRLVAADGWTARLRSPWPWLALLALGLGLLCWLLLLQRVEVGSAYPMLALNFVLVTLAARFVFDEPVDRRHLAGLLLIVAGVALLGRSA</sequence>
<proteinExistence type="inferred from homology"/>
<accession>B7VBM9</accession>
<dbReference type="EMBL" id="FM209186">
    <property type="protein sequence ID" value="CAW26204.1"/>
    <property type="molecule type" value="Genomic_DNA"/>
</dbReference>
<dbReference type="RefSeq" id="WP_003112876.1">
    <property type="nucleotide sequence ID" value="NC_011770.1"/>
</dbReference>
<dbReference type="SMR" id="B7VBM9"/>
<dbReference type="KEGG" id="pag:PLES_14761"/>
<dbReference type="HOGENOM" id="CLU_131462_5_1_6"/>
<dbReference type="UniPathway" id="UPA00030"/>
<dbReference type="GO" id="GO:0005886">
    <property type="term" value="C:plasma membrane"/>
    <property type="evidence" value="ECO:0007669"/>
    <property type="project" value="UniProtKB-SubCell"/>
</dbReference>
<dbReference type="GO" id="GO:1901505">
    <property type="term" value="F:carbohydrate derivative transmembrane transporter activity"/>
    <property type="evidence" value="ECO:0007669"/>
    <property type="project" value="InterPro"/>
</dbReference>
<dbReference type="GO" id="GO:0009245">
    <property type="term" value="P:lipid A biosynthetic process"/>
    <property type="evidence" value="ECO:0007669"/>
    <property type="project" value="UniProtKB-UniRule"/>
</dbReference>
<dbReference type="GO" id="GO:0009103">
    <property type="term" value="P:lipopolysaccharide biosynthetic process"/>
    <property type="evidence" value="ECO:0007669"/>
    <property type="project" value="UniProtKB-UniRule"/>
</dbReference>
<dbReference type="FunFam" id="1.10.3730.20:FF:000002">
    <property type="entry name" value="Probable 4-amino-4-deoxy-L-arabinose-phosphoundecaprenol flippase subunit ArnE"/>
    <property type="match status" value="1"/>
</dbReference>
<dbReference type="Gene3D" id="1.10.3730.20">
    <property type="match status" value="1"/>
</dbReference>
<dbReference type="HAMAP" id="MF_01869">
    <property type="entry name" value="Flippase_ArnE"/>
    <property type="match status" value="1"/>
</dbReference>
<dbReference type="InterPro" id="IPR000620">
    <property type="entry name" value="EamA_dom"/>
</dbReference>
<dbReference type="InterPro" id="IPR022883">
    <property type="entry name" value="Flippase_ArnE"/>
</dbReference>
<dbReference type="InterPro" id="IPR000390">
    <property type="entry name" value="Small_drug/metabolite_transptr"/>
</dbReference>
<dbReference type="PANTHER" id="PTHR30561:SF23">
    <property type="entry name" value="4-AMINO-4-DEOXY-L-ARABINOSE-PHOSPHOUNDECAPRENOL FLIPPASE SUBUNIT ARNE-RELATED"/>
    <property type="match status" value="1"/>
</dbReference>
<dbReference type="PANTHER" id="PTHR30561">
    <property type="entry name" value="SMR FAMILY PROTON-DEPENDENT DRUG EFFLUX TRANSPORTER SUGE"/>
    <property type="match status" value="1"/>
</dbReference>
<dbReference type="Pfam" id="PF00892">
    <property type="entry name" value="EamA"/>
    <property type="match status" value="1"/>
</dbReference>
<dbReference type="SUPFAM" id="SSF103481">
    <property type="entry name" value="Multidrug resistance efflux transporter EmrE"/>
    <property type="match status" value="1"/>
</dbReference>
<evidence type="ECO:0000255" key="1">
    <source>
        <dbReference type="HAMAP-Rule" id="MF_01869"/>
    </source>
</evidence>
<gene>
    <name evidence="1" type="primary">arnE</name>
    <name type="ordered locus">PLES_14761</name>
</gene>
<reference key="1">
    <citation type="journal article" date="2009" name="Genome Res.">
        <title>Newly introduced genomic prophage islands are critical determinants of in vivo competitiveness in the Liverpool epidemic strain of Pseudomonas aeruginosa.</title>
        <authorList>
            <person name="Winstanley C."/>
            <person name="Langille M.G.I."/>
            <person name="Fothergill J.L."/>
            <person name="Kukavica-Ibrulj I."/>
            <person name="Paradis-Bleau C."/>
            <person name="Sanschagrin F."/>
            <person name="Thomson N.R."/>
            <person name="Winsor G.L."/>
            <person name="Quail M.A."/>
            <person name="Lennard N."/>
            <person name="Bignell A."/>
            <person name="Clarke L."/>
            <person name="Seeger K."/>
            <person name="Saunders D."/>
            <person name="Harris D."/>
            <person name="Parkhill J."/>
            <person name="Hancock R.E.W."/>
            <person name="Brinkman F.S.L."/>
            <person name="Levesque R.C."/>
        </authorList>
    </citation>
    <scope>NUCLEOTIDE SEQUENCE [LARGE SCALE GENOMIC DNA]</scope>
    <source>
        <strain>LESB58</strain>
    </source>
</reference>
<organism>
    <name type="scientific">Pseudomonas aeruginosa (strain LESB58)</name>
    <dbReference type="NCBI Taxonomy" id="557722"/>
    <lineage>
        <taxon>Bacteria</taxon>
        <taxon>Pseudomonadati</taxon>
        <taxon>Pseudomonadota</taxon>
        <taxon>Gammaproteobacteria</taxon>
        <taxon>Pseudomonadales</taxon>
        <taxon>Pseudomonadaceae</taxon>
        <taxon>Pseudomonas</taxon>
    </lineage>
</organism>
<keyword id="KW-0997">Cell inner membrane</keyword>
<keyword id="KW-1003">Cell membrane</keyword>
<keyword id="KW-0441">Lipid A biosynthesis</keyword>
<keyword id="KW-0444">Lipid biosynthesis</keyword>
<keyword id="KW-0443">Lipid metabolism</keyword>
<keyword id="KW-0448">Lipopolysaccharide biosynthesis</keyword>
<keyword id="KW-0472">Membrane</keyword>
<keyword id="KW-0812">Transmembrane</keyword>
<keyword id="KW-1133">Transmembrane helix</keyword>
<keyword id="KW-0813">Transport</keyword>